<gene>
    <name evidence="1" type="primary">purH</name>
    <name type="ordered locus">EF_1778</name>
</gene>
<dbReference type="EC" id="2.1.2.3" evidence="1"/>
<dbReference type="EC" id="3.5.4.10" evidence="1"/>
<dbReference type="EMBL" id="AE016830">
    <property type="protein sequence ID" value="AAO81549.1"/>
    <property type="molecule type" value="Genomic_DNA"/>
</dbReference>
<dbReference type="RefSeq" id="NP_815479.1">
    <property type="nucleotide sequence ID" value="NC_004668.1"/>
</dbReference>
<dbReference type="RefSeq" id="WP_010706668.1">
    <property type="nucleotide sequence ID" value="NZ_KE136528.1"/>
</dbReference>
<dbReference type="SMR" id="Q833Z3"/>
<dbReference type="STRING" id="226185.EF_1778"/>
<dbReference type="EnsemblBacteria" id="AAO81549">
    <property type="protein sequence ID" value="AAO81549"/>
    <property type="gene ID" value="EF_1778"/>
</dbReference>
<dbReference type="KEGG" id="efa:EF1778"/>
<dbReference type="PATRIC" id="fig|226185.45.peg.1737"/>
<dbReference type="eggNOG" id="COG0138">
    <property type="taxonomic scope" value="Bacteria"/>
</dbReference>
<dbReference type="HOGENOM" id="CLU_016316_5_2_9"/>
<dbReference type="UniPathway" id="UPA00074">
    <property type="reaction ID" value="UER00133"/>
</dbReference>
<dbReference type="UniPathway" id="UPA00074">
    <property type="reaction ID" value="UER00135"/>
</dbReference>
<dbReference type="Proteomes" id="UP000001415">
    <property type="component" value="Chromosome"/>
</dbReference>
<dbReference type="GO" id="GO:0005829">
    <property type="term" value="C:cytosol"/>
    <property type="evidence" value="ECO:0007669"/>
    <property type="project" value="TreeGrafter"/>
</dbReference>
<dbReference type="GO" id="GO:0003937">
    <property type="term" value="F:IMP cyclohydrolase activity"/>
    <property type="evidence" value="ECO:0007669"/>
    <property type="project" value="UniProtKB-UniRule"/>
</dbReference>
<dbReference type="GO" id="GO:0004643">
    <property type="term" value="F:phosphoribosylaminoimidazolecarboxamide formyltransferase activity"/>
    <property type="evidence" value="ECO:0007669"/>
    <property type="project" value="UniProtKB-UniRule"/>
</dbReference>
<dbReference type="GO" id="GO:0006189">
    <property type="term" value="P:'de novo' IMP biosynthetic process"/>
    <property type="evidence" value="ECO:0007669"/>
    <property type="project" value="UniProtKB-UniRule"/>
</dbReference>
<dbReference type="CDD" id="cd01421">
    <property type="entry name" value="IMPCH"/>
    <property type="match status" value="1"/>
</dbReference>
<dbReference type="FunFam" id="3.40.140.20:FF:000001">
    <property type="entry name" value="Bifunctional purine biosynthesis protein PurH"/>
    <property type="match status" value="1"/>
</dbReference>
<dbReference type="FunFam" id="3.40.140.20:FF:000002">
    <property type="entry name" value="Bifunctional purine biosynthesis protein PurH"/>
    <property type="match status" value="1"/>
</dbReference>
<dbReference type="FunFam" id="3.40.50.1380:FF:000001">
    <property type="entry name" value="Bifunctional purine biosynthesis protein PurH"/>
    <property type="match status" value="1"/>
</dbReference>
<dbReference type="Gene3D" id="3.40.140.20">
    <property type="match status" value="2"/>
</dbReference>
<dbReference type="Gene3D" id="3.40.50.1380">
    <property type="entry name" value="Methylglyoxal synthase-like domain"/>
    <property type="match status" value="1"/>
</dbReference>
<dbReference type="HAMAP" id="MF_00139">
    <property type="entry name" value="PurH"/>
    <property type="match status" value="1"/>
</dbReference>
<dbReference type="InterPro" id="IPR024051">
    <property type="entry name" value="AICAR_Tfase_dup_dom_sf"/>
</dbReference>
<dbReference type="InterPro" id="IPR016193">
    <property type="entry name" value="Cytidine_deaminase-like"/>
</dbReference>
<dbReference type="InterPro" id="IPR011607">
    <property type="entry name" value="MGS-like_dom"/>
</dbReference>
<dbReference type="InterPro" id="IPR036914">
    <property type="entry name" value="MGS-like_dom_sf"/>
</dbReference>
<dbReference type="InterPro" id="IPR002695">
    <property type="entry name" value="PurH-like"/>
</dbReference>
<dbReference type="NCBIfam" id="NF002049">
    <property type="entry name" value="PRK00881.1"/>
    <property type="match status" value="1"/>
</dbReference>
<dbReference type="NCBIfam" id="TIGR00355">
    <property type="entry name" value="purH"/>
    <property type="match status" value="1"/>
</dbReference>
<dbReference type="PANTHER" id="PTHR11692:SF0">
    <property type="entry name" value="BIFUNCTIONAL PURINE BIOSYNTHESIS PROTEIN ATIC"/>
    <property type="match status" value="1"/>
</dbReference>
<dbReference type="PANTHER" id="PTHR11692">
    <property type="entry name" value="BIFUNCTIONAL PURINE BIOSYNTHESIS PROTEIN PURH"/>
    <property type="match status" value="1"/>
</dbReference>
<dbReference type="Pfam" id="PF01808">
    <property type="entry name" value="AICARFT_IMPCHas"/>
    <property type="match status" value="1"/>
</dbReference>
<dbReference type="Pfam" id="PF02142">
    <property type="entry name" value="MGS"/>
    <property type="match status" value="1"/>
</dbReference>
<dbReference type="PIRSF" id="PIRSF000414">
    <property type="entry name" value="AICARFT_IMPCHas"/>
    <property type="match status" value="1"/>
</dbReference>
<dbReference type="SMART" id="SM00798">
    <property type="entry name" value="AICARFT_IMPCHas"/>
    <property type="match status" value="1"/>
</dbReference>
<dbReference type="SMART" id="SM00851">
    <property type="entry name" value="MGS"/>
    <property type="match status" value="1"/>
</dbReference>
<dbReference type="SUPFAM" id="SSF53927">
    <property type="entry name" value="Cytidine deaminase-like"/>
    <property type="match status" value="1"/>
</dbReference>
<dbReference type="SUPFAM" id="SSF52335">
    <property type="entry name" value="Methylglyoxal synthase-like"/>
    <property type="match status" value="1"/>
</dbReference>
<dbReference type="PROSITE" id="PS51855">
    <property type="entry name" value="MGS"/>
    <property type="match status" value="1"/>
</dbReference>
<accession>Q833Z3</accession>
<comment type="catalytic activity">
    <reaction evidence="1">
        <text>(6R)-10-formyltetrahydrofolate + 5-amino-1-(5-phospho-beta-D-ribosyl)imidazole-4-carboxamide = 5-formamido-1-(5-phospho-D-ribosyl)imidazole-4-carboxamide + (6S)-5,6,7,8-tetrahydrofolate</text>
        <dbReference type="Rhea" id="RHEA:22192"/>
        <dbReference type="ChEBI" id="CHEBI:57453"/>
        <dbReference type="ChEBI" id="CHEBI:58467"/>
        <dbReference type="ChEBI" id="CHEBI:58475"/>
        <dbReference type="ChEBI" id="CHEBI:195366"/>
        <dbReference type="EC" id="2.1.2.3"/>
    </reaction>
</comment>
<comment type="catalytic activity">
    <reaction evidence="1">
        <text>IMP + H2O = 5-formamido-1-(5-phospho-D-ribosyl)imidazole-4-carboxamide</text>
        <dbReference type="Rhea" id="RHEA:18445"/>
        <dbReference type="ChEBI" id="CHEBI:15377"/>
        <dbReference type="ChEBI" id="CHEBI:58053"/>
        <dbReference type="ChEBI" id="CHEBI:58467"/>
        <dbReference type="EC" id="3.5.4.10"/>
    </reaction>
</comment>
<comment type="pathway">
    <text evidence="1">Purine metabolism; IMP biosynthesis via de novo pathway; 5-formamido-1-(5-phospho-D-ribosyl)imidazole-4-carboxamide from 5-amino-1-(5-phospho-D-ribosyl)imidazole-4-carboxamide (10-formyl THF route): step 1/1.</text>
</comment>
<comment type="pathway">
    <text evidence="1">Purine metabolism; IMP biosynthesis via de novo pathway; IMP from 5-formamido-1-(5-phospho-D-ribosyl)imidazole-4-carboxamide: step 1/1.</text>
</comment>
<comment type="domain">
    <text evidence="1">The IMP cyclohydrolase activity resides in the N-terminal region.</text>
</comment>
<comment type="similarity">
    <text evidence="1">Belongs to the PurH family.</text>
</comment>
<protein>
    <recommendedName>
        <fullName evidence="1">Bifunctional purine biosynthesis protein PurH</fullName>
    </recommendedName>
    <domain>
        <recommendedName>
            <fullName evidence="1">Phosphoribosylaminoimidazolecarboxamide formyltransferase</fullName>
            <ecNumber evidence="1">2.1.2.3</ecNumber>
        </recommendedName>
        <alternativeName>
            <fullName evidence="1">AICAR transformylase</fullName>
        </alternativeName>
    </domain>
    <domain>
        <recommendedName>
            <fullName evidence="1">IMP cyclohydrolase</fullName>
            <ecNumber evidence="1">3.5.4.10</ecNumber>
        </recommendedName>
        <alternativeName>
            <fullName evidence="1">ATIC</fullName>
        </alternativeName>
        <alternativeName>
            <fullName evidence="1">IMP synthase</fullName>
        </alternativeName>
        <alternativeName>
            <fullName evidence="1">Inosinicase</fullName>
        </alternativeName>
    </domain>
</protein>
<sequence length="513" mass="55523">MTKRALISVSDKTGVTTFAAGLVANGFEIISTGGTRTVLEEAGVPTLAIDDITGFPEMLDGRVKTLHPNIHGGLLAKRGNQAHQKALTEQGIHFIDLVVVNLYPFKETILKPAISEAEAIEMIDIGGPSMLRSAAKNYQDVTAVVDPSDYEQVLSEISSTGTSQLATRKRLAAKVFRHTAAYDALIADYLTTQVGETEPEKQTLTYERKQTLRYGENSHQQATFYQSVVPVSLSIASARQLHGKELSYNNIRDADAALRIASEFTEPTVVAVKHMNPCGIGTGKTILAAYRQAFEADPVSIFGGIVVLNRPVDQATAAEMHQIFLEIIIAPSFEEEALALLSQKKNLRLLTLDFHAQEKKAVELVSVMGGLLIQEQDTVVENDQAWQVVTERQPTPAERDALNFAWKAVKHVKSNAIVLANESQTVGIGAGQMNRIGSVKIAVDQAQAAGKLQGAVLASDAFFPMADSVEYAAQHGIQAIIQPGGSIKDQASIDLANHYGIAMIFTGTRHFKH</sequence>
<name>PUR9_ENTFA</name>
<feature type="chain" id="PRO_1000018889" description="Bifunctional purine biosynthesis protein PurH">
    <location>
        <begin position="1"/>
        <end position="513"/>
    </location>
</feature>
<feature type="domain" description="MGS-like" evidence="2">
    <location>
        <begin position="1"/>
        <end position="145"/>
    </location>
</feature>
<evidence type="ECO:0000255" key="1">
    <source>
        <dbReference type="HAMAP-Rule" id="MF_00139"/>
    </source>
</evidence>
<evidence type="ECO:0000255" key="2">
    <source>
        <dbReference type="PROSITE-ProRule" id="PRU01202"/>
    </source>
</evidence>
<reference key="1">
    <citation type="journal article" date="2003" name="Science">
        <title>Role of mobile DNA in the evolution of vancomycin-resistant Enterococcus faecalis.</title>
        <authorList>
            <person name="Paulsen I.T."/>
            <person name="Banerjei L."/>
            <person name="Myers G.S.A."/>
            <person name="Nelson K.E."/>
            <person name="Seshadri R."/>
            <person name="Read T.D."/>
            <person name="Fouts D.E."/>
            <person name="Eisen J.A."/>
            <person name="Gill S.R."/>
            <person name="Heidelberg J.F."/>
            <person name="Tettelin H."/>
            <person name="Dodson R.J."/>
            <person name="Umayam L.A."/>
            <person name="Brinkac L.M."/>
            <person name="Beanan M.J."/>
            <person name="Daugherty S.C."/>
            <person name="DeBoy R.T."/>
            <person name="Durkin S.A."/>
            <person name="Kolonay J.F."/>
            <person name="Madupu R."/>
            <person name="Nelson W.C."/>
            <person name="Vamathevan J.J."/>
            <person name="Tran B."/>
            <person name="Upton J."/>
            <person name="Hansen T."/>
            <person name="Shetty J."/>
            <person name="Khouri H.M."/>
            <person name="Utterback T.R."/>
            <person name="Radune D."/>
            <person name="Ketchum K.A."/>
            <person name="Dougherty B.A."/>
            <person name="Fraser C.M."/>
        </authorList>
    </citation>
    <scope>NUCLEOTIDE SEQUENCE [LARGE SCALE GENOMIC DNA]</scope>
    <source>
        <strain>ATCC 700802 / V583</strain>
    </source>
</reference>
<keyword id="KW-0378">Hydrolase</keyword>
<keyword id="KW-0511">Multifunctional enzyme</keyword>
<keyword id="KW-0658">Purine biosynthesis</keyword>
<keyword id="KW-1185">Reference proteome</keyword>
<keyword id="KW-0808">Transferase</keyword>
<organism>
    <name type="scientific">Enterococcus faecalis (strain ATCC 700802 / V583)</name>
    <dbReference type="NCBI Taxonomy" id="226185"/>
    <lineage>
        <taxon>Bacteria</taxon>
        <taxon>Bacillati</taxon>
        <taxon>Bacillota</taxon>
        <taxon>Bacilli</taxon>
        <taxon>Lactobacillales</taxon>
        <taxon>Enterococcaceae</taxon>
        <taxon>Enterococcus</taxon>
    </lineage>
</organism>
<proteinExistence type="inferred from homology"/>